<accession>Q8KCD7</accession>
<comment type="function">
    <text evidence="1">Participates actively in the response to hyperosmotic and heat shock by preventing the aggregation of stress-denatured proteins, in association with DnaK and GrpE. It is the nucleotide exchange factor for DnaK and may function as a thermosensor. Unfolded proteins bind initially to DnaJ; upon interaction with the DnaJ-bound protein, DnaK hydrolyzes its bound ATP, resulting in the formation of a stable complex. GrpE releases ADP from DnaK; ATP binding to DnaK triggers the release of the substrate protein, thus completing the reaction cycle. Several rounds of ATP-dependent interactions between DnaJ, DnaK and GrpE are required for fully efficient folding.</text>
</comment>
<comment type="subunit">
    <text evidence="1">Homodimer.</text>
</comment>
<comment type="subcellular location">
    <subcellularLocation>
        <location evidence="1">Cytoplasm</location>
    </subcellularLocation>
</comment>
<comment type="similarity">
    <text evidence="1">Belongs to the GrpE family.</text>
</comment>
<gene>
    <name evidence="1" type="primary">grpE</name>
    <name type="ordered locus">CT1485</name>
</gene>
<reference key="1">
    <citation type="journal article" date="2002" name="Proc. Natl. Acad. Sci. U.S.A.">
        <title>The complete genome sequence of Chlorobium tepidum TLS, a photosynthetic, anaerobic, green-sulfur bacterium.</title>
        <authorList>
            <person name="Eisen J.A."/>
            <person name="Nelson K.E."/>
            <person name="Paulsen I.T."/>
            <person name="Heidelberg J.F."/>
            <person name="Wu M."/>
            <person name="Dodson R.J."/>
            <person name="DeBoy R.T."/>
            <person name="Gwinn M.L."/>
            <person name="Nelson W.C."/>
            <person name="Haft D.H."/>
            <person name="Hickey E.K."/>
            <person name="Peterson J.D."/>
            <person name="Durkin A.S."/>
            <person name="Kolonay J.F."/>
            <person name="Yang F."/>
            <person name="Holt I.E."/>
            <person name="Umayam L.A."/>
            <person name="Mason T.M."/>
            <person name="Brenner M."/>
            <person name="Shea T.P."/>
            <person name="Parksey D.S."/>
            <person name="Nierman W.C."/>
            <person name="Feldblyum T.V."/>
            <person name="Hansen C.L."/>
            <person name="Craven M.B."/>
            <person name="Radune D."/>
            <person name="Vamathevan J.J."/>
            <person name="Khouri H.M."/>
            <person name="White O."/>
            <person name="Gruber T.M."/>
            <person name="Ketchum K.A."/>
            <person name="Venter J.C."/>
            <person name="Tettelin H."/>
            <person name="Bryant D.A."/>
            <person name="Fraser C.M."/>
        </authorList>
    </citation>
    <scope>NUCLEOTIDE SEQUENCE [LARGE SCALE GENOMIC DNA]</scope>
    <source>
        <strain>ATCC 49652 / DSM 12025 / NBRC 103806 / TLS</strain>
    </source>
</reference>
<dbReference type="EMBL" id="AE006470">
    <property type="protein sequence ID" value="AAM72712.1"/>
    <property type="molecule type" value="Genomic_DNA"/>
</dbReference>
<dbReference type="RefSeq" id="NP_662370.1">
    <property type="nucleotide sequence ID" value="NC_002932.3"/>
</dbReference>
<dbReference type="RefSeq" id="WP_010933151.1">
    <property type="nucleotide sequence ID" value="NC_002932.3"/>
</dbReference>
<dbReference type="SMR" id="Q8KCD7"/>
<dbReference type="STRING" id="194439.CT1485"/>
<dbReference type="EnsemblBacteria" id="AAM72712">
    <property type="protein sequence ID" value="AAM72712"/>
    <property type="gene ID" value="CT1485"/>
</dbReference>
<dbReference type="KEGG" id="cte:CT1485"/>
<dbReference type="PATRIC" id="fig|194439.7.peg.1346"/>
<dbReference type="eggNOG" id="COG0576">
    <property type="taxonomic scope" value="Bacteria"/>
</dbReference>
<dbReference type="HOGENOM" id="CLU_057217_0_2_10"/>
<dbReference type="OrthoDB" id="9812586at2"/>
<dbReference type="Proteomes" id="UP000001007">
    <property type="component" value="Chromosome"/>
</dbReference>
<dbReference type="GO" id="GO:0005737">
    <property type="term" value="C:cytoplasm"/>
    <property type="evidence" value="ECO:0007669"/>
    <property type="project" value="UniProtKB-SubCell"/>
</dbReference>
<dbReference type="GO" id="GO:0000774">
    <property type="term" value="F:adenyl-nucleotide exchange factor activity"/>
    <property type="evidence" value="ECO:0007669"/>
    <property type="project" value="InterPro"/>
</dbReference>
<dbReference type="GO" id="GO:0042803">
    <property type="term" value="F:protein homodimerization activity"/>
    <property type="evidence" value="ECO:0007669"/>
    <property type="project" value="InterPro"/>
</dbReference>
<dbReference type="GO" id="GO:0051087">
    <property type="term" value="F:protein-folding chaperone binding"/>
    <property type="evidence" value="ECO:0007669"/>
    <property type="project" value="InterPro"/>
</dbReference>
<dbReference type="GO" id="GO:0051082">
    <property type="term" value="F:unfolded protein binding"/>
    <property type="evidence" value="ECO:0007669"/>
    <property type="project" value="TreeGrafter"/>
</dbReference>
<dbReference type="GO" id="GO:0006457">
    <property type="term" value="P:protein folding"/>
    <property type="evidence" value="ECO:0007669"/>
    <property type="project" value="InterPro"/>
</dbReference>
<dbReference type="CDD" id="cd00446">
    <property type="entry name" value="GrpE"/>
    <property type="match status" value="1"/>
</dbReference>
<dbReference type="FunFam" id="2.30.22.10:FF:000001">
    <property type="entry name" value="Protein GrpE"/>
    <property type="match status" value="1"/>
</dbReference>
<dbReference type="Gene3D" id="3.90.20.20">
    <property type="match status" value="1"/>
</dbReference>
<dbReference type="Gene3D" id="2.30.22.10">
    <property type="entry name" value="Head domain of nucleotide exchange factor GrpE"/>
    <property type="match status" value="1"/>
</dbReference>
<dbReference type="HAMAP" id="MF_01151">
    <property type="entry name" value="GrpE"/>
    <property type="match status" value="1"/>
</dbReference>
<dbReference type="InterPro" id="IPR000740">
    <property type="entry name" value="GrpE"/>
</dbReference>
<dbReference type="InterPro" id="IPR013805">
    <property type="entry name" value="GrpE_coiled_coil"/>
</dbReference>
<dbReference type="InterPro" id="IPR009012">
    <property type="entry name" value="GrpE_head"/>
</dbReference>
<dbReference type="PANTHER" id="PTHR21237">
    <property type="entry name" value="GRPE PROTEIN"/>
    <property type="match status" value="1"/>
</dbReference>
<dbReference type="PANTHER" id="PTHR21237:SF23">
    <property type="entry name" value="GRPE PROTEIN HOMOLOG, MITOCHONDRIAL"/>
    <property type="match status" value="1"/>
</dbReference>
<dbReference type="Pfam" id="PF01025">
    <property type="entry name" value="GrpE"/>
    <property type="match status" value="1"/>
</dbReference>
<dbReference type="PRINTS" id="PR00773">
    <property type="entry name" value="GRPEPROTEIN"/>
</dbReference>
<dbReference type="SUPFAM" id="SSF58014">
    <property type="entry name" value="Coiled-coil domain of nucleotide exchange factor GrpE"/>
    <property type="match status" value="1"/>
</dbReference>
<dbReference type="SUPFAM" id="SSF51064">
    <property type="entry name" value="Head domain of nucleotide exchange factor GrpE"/>
    <property type="match status" value="1"/>
</dbReference>
<dbReference type="PROSITE" id="PS01071">
    <property type="entry name" value="GRPE"/>
    <property type="match status" value="1"/>
</dbReference>
<evidence type="ECO:0000255" key="1">
    <source>
        <dbReference type="HAMAP-Rule" id="MF_01151"/>
    </source>
</evidence>
<evidence type="ECO:0000256" key="2">
    <source>
        <dbReference type="SAM" id="MobiDB-lite"/>
    </source>
</evidence>
<sequence>MSRKHHKEQEEIQEQETISAGAAETPAEETAAIPAATEADMDAEISARDAEIQKLREEVMRRAAEFENFRKQKEREAALSGTRMLENIVRELLPLIDDLKRLMSHIPAEMQAMAEAKPFIEGVELIHKNFMSLLERKGVKEIEAKGKMLDVNFHEAITQIDAPGAEPDTIVEEYQTGYTLGDRVIRHAKVIVAK</sequence>
<proteinExistence type="inferred from homology"/>
<protein>
    <recommendedName>
        <fullName evidence="1">Protein GrpE</fullName>
    </recommendedName>
    <alternativeName>
        <fullName evidence="1">HSP-70 cofactor</fullName>
    </alternativeName>
</protein>
<keyword id="KW-0143">Chaperone</keyword>
<keyword id="KW-0963">Cytoplasm</keyword>
<keyword id="KW-1185">Reference proteome</keyword>
<keyword id="KW-0346">Stress response</keyword>
<feature type="chain" id="PRO_0000113770" description="Protein GrpE">
    <location>
        <begin position="1"/>
        <end position="194"/>
    </location>
</feature>
<feature type="region of interest" description="Disordered" evidence="2">
    <location>
        <begin position="1"/>
        <end position="40"/>
    </location>
</feature>
<feature type="compositionally biased region" description="Low complexity" evidence="2">
    <location>
        <begin position="20"/>
        <end position="38"/>
    </location>
</feature>
<name>GRPE_CHLTE</name>
<organism>
    <name type="scientific">Chlorobaculum tepidum (strain ATCC 49652 / DSM 12025 / NBRC 103806 / TLS)</name>
    <name type="common">Chlorobium tepidum</name>
    <dbReference type="NCBI Taxonomy" id="194439"/>
    <lineage>
        <taxon>Bacteria</taxon>
        <taxon>Pseudomonadati</taxon>
        <taxon>Chlorobiota</taxon>
        <taxon>Chlorobiia</taxon>
        <taxon>Chlorobiales</taxon>
        <taxon>Chlorobiaceae</taxon>
        <taxon>Chlorobaculum</taxon>
    </lineage>
</organism>